<comment type="function">
    <text evidence="1">Involved in cell division and chromosome segregation.</text>
</comment>
<comment type="similarity">
    <text evidence="1">Belongs to the WhiA family.</text>
</comment>
<name>WHIA_CORDI</name>
<organism>
    <name type="scientific">Corynebacterium diphtheriae (strain ATCC 700971 / NCTC 13129 / Biotype gravis)</name>
    <dbReference type="NCBI Taxonomy" id="257309"/>
    <lineage>
        <taxon>Bacteria</taxon>
        <taxon>Bacillati</taxon>
        <taxon>Actinomycetota</taxon>
        <taxon>Actinomycetes</taxon>
        <taxon>Mycobacteriales</taxon>
        <taxon>Corynebacteriaceae</taxon>
        <taxon>Corynebacterium</taxon>
    </lineage>
</organism>
<evidence type="ECO:0000255" key="1">
    <source>
        <dbReference type="HAMAP-Rule" id="MF_01420"/>
    </source>
</evidence>
<feature type="chain" id="PRO_0000376472" description="Probable cell division protein WhiA">
    <location>
        <begin position="1"/>
        <end position="328"/>
    </location>
</feature>
<feature type="DNA-binding region" description="H-T-H motif" evidence="1">
    <location>
        <begin position="276"/>
        <end position="309"/>
    </location>
</feature>
<dbReference type="EMBL" id="BX248357">
    <property type="protein sequence ID" value="CAE49839.1"/>
    <property type="molecule type" value="Genomic_DNA"/>
</dbReference>
<dbReference type="RefSeq" id="WP_010934973.1">
    <property type="nucleotide sequence ID" value="NC_002935.2"/>
</dbReference>
<dbReference type="SMR" id="Q6NH34"/>
<dbReference type="STRING" id="257309.DIP1311"/>
<dbReference type="KEGG" id="cdi:DIP1311"/>
<dbReference type="HOGENOM" id="CLU_053282_0_0_11"/>
<dbReference type="Proteomes" id="UP000002198">
    <property type="component" value="Chromosome"/>
</dbReference>
<dbReference type="GO" id="GO:0003677">
    <property type="term" value="F:DNA binding"/>
    <property type="evidence" value="ECO:0007669"/>
    <property type="project" value="UniProtKB-UniRule"/>
</dbReference>
<dbReference type="GO" id="GO:0051301">
    <property type="term" value="P:cell division"/>
    <property type="evidence" value="ECO:0007669"/>
    <property type="project" value="UniProtKB-UniRule"/>
</dbReference>
<dbReference type="GO" id="GO:0043937">
    <property type="term" value="P:regulation of sporulation"/>
    <property type="evidence" value="ECO:0007669"/>
    <property type="project" value="InterPro"/>
</dbReference>
<dbReference type="FunFam" id="3.10.28.10:FF:000001">
    <property type="entry name" value="Probable cell division protein WhiA"/>
    <property type="match status" value="1"/>
</dbReference>
<dbReference type="Gene3D" id="3.10.28.10">
    <property type="entry name" value="Homing endonucleases"/>
    <property type="match status" value="1"/>
</dbReference>
<dbReference type="HAMAP" id="MF_01420">
    <property type="entry name" value="HTH_type_WhiA"/>
    <property type="match status" value="1"/>
</dbReference>
<dbReference type="InterPro" id="IPR027434">
    <property type="entry name" value="Homing_endonucl"/>
</dbReference>
<dbReference type="InterPro" id="IPR018478">
    <property type="entry name" value="Sporu_reg_WhiA_N_dom"/>
</dbReference>
<dbReference type="InterPro" id="IPR003802">
    <property type="entry name" value="Sporulation_regulator_WhiA"/>
</dbReference>
<dbReference type="InterPro" id="IPR023054">
    <property type="entry name" value="Sporulation_regulator_WhiA_C"/>
</dbReference>
<dbReference type="InterPro" id="IPR039518">
    <property type="entry name" value="WhiA_LAGLIDADG_dom"/>
</dbReference>
<dbReference type="NCBIfam" id="TIGR00647">
    <property type="entry name" value="DNA_bind_WhiA"/>
    <property type="match status" value="1"/>
</dbReference>
<dbReference type="PANTHER" id="PTHR37307">
    <property type="entry name" value="CELL DIVISION PROTEIN WHIA-RELATED"/>
    <property type="match status" value="1"/>
</dbReference>
<dbReference type="PANTHER" id="PTHR37307:SF1">
    <property type="entry name" value="CELL DIVISION PROTEIN WHIA-RELATED"/>
    <property type="match status" value="1"/>
</dbReference>
<dbReference type="Pfam" id="PF02650">
    <property type="entry name" value="HTH_WhiA"/>
    <property type="match status" value="1"/>
</dbReference>
<dbReference type="Pfam" id="PF14527">
    <property type="entry name" value="LAGLIDADG_WhiA"/>
    <property type="match status" value="1"/>
</dbReference>
<dbReference type="Pfam" id="PF10298">
    <property type="entry name" value="WhiA_N"/>
    <property type="match status" value="1"/>
</dbReference>
<accession>Q6NH34</accession>
<reference key="1">
    <citation type="journal article" date="2003" name="Nucleic Acids Res.">
        <title>The complete genome sequence and analysis of Corynebacterium diphtheriae NCTC13129.</title>
        <authorList>
            <person name="Cerdeno-Tarraga A.-M."/>
            <person name="Efstratiou A."/>
            <person name="Dover L.G."/>
            <person name="Holden M.T.G."/>
            <person name="Pallen M.J."/>
            <person name="Bentley S.D."/>
            <person name="Besra G.S."/>
            <person name="Churcher C.M."/>
            <person name="James K.D."/>
            <person name="De Zoysa A."/>
            <person name="Chillingworth T."/>
            <person name="Cronin A."/>
            <person name="Dowd L."/>
            <person name="Feltwell T."/>
            <person name="Hamlin N."/>
            <person name="Holroyd S."/>
            <person name="Jagels K."/>
            <person name="Moule S."/>
            <person name="Quail M.A."/>
            <person name="Rabbinowitsch E."/>
            <person name="Rutherford K.M."/>
            <person name="Thomson N.R."/>
            <person name="Unwin L."/>
            <person name="Whitehead S."/>
            <person name="Barrell B.G."/>
            <person name="Parkhill J."/>
        </authorList>
    </citation>
    <scope>NUCLEOTIDE SEQUENCE [LARGE SCALE GENOMIC DNA]</scope>
    <source>
        <strain>ATCC 700971 / NCTC 13129 / Biotype gravis</strain>
    </source>
</reference>
<proteinExistence type="inferred from homology"/>
<sequence length="328" mass="35284">MGALSAQVKDELIKVSSTKQRSRIAELASIIRFAGSIDSALGKTVIEIELDNEAVAIRVAKEIEELFAISAKLVDLGPMATRRTPRHVVRIAEDAETLIRRVGLVTRSGHAVVGLPPQIISGSISDAEAAWRGAFLAAGQLSDPGRTSGLEVACPCLEASLALVGCARRLGLSAKPKETRGVEKVVIRDGEAVGALLSRMGAHKTRLVWDQKRARREARPLGNRLANFDDANLRRSARAAVAAAARVERAMTILGDDVPDHLAQAGQLRVQHRQASLEELGRLADPQMTKDAVAGRIRRLLHMADKKASDMGIPDTSVVVTEELLDDF</sequence>
<protein>
    <recommendedName>
        <fullName evidence="1">Probable cell division protein WhiA</fullName>
    </recommendedName>
</protein>
<keyword id="KW-0131">Cell cycle</keyword>
<keyword id="KW-0132">Cell division</keyword>
<keyword id="KW-0238">DNA-binding</keyword>
<keyword id="KW-1185">Reference proteome</keyword>
<gene>
    <name evidence="1" type="primary">whiA</name>
    <name type="ordered locus">DIP1311</name>
</gene>